<comment type="function">
    <molecule>Methyltransferase/Protease</molecule>
    <text evidence="1 2">Acts as a cysteine protease, methyltransferase and deubiquitinase (By similarity). The cysteine protease activity cleaves the polyprotein giving rise to mature proteins (By similarity). The methyltransferase domain is probably involved in viral RNA capping (By similarity).</text>
</comment>
<comment type="function">
    <molecule>RNA-directed RNA polymerase</molecule>
    <text evidence="1">RNA-directed RNA polymerase is responsible for the replication and transcription of the genome.</text>
</comment>
<comment type="catalytic activity">
    <molecule>RNA-directed RNA polymerase</molecule>
    <reaction evidence="4">
        <text>RNA(n) + a ribonucleoside 5'-triphosphate = RNA(n+1) + diphosphate</text>
        <dbReference type="Rhea" id="RHEA:21248"/>
        <dbReference type="Rhea" id="RHEA-COMP:14527"/>
        <dbReference type="Rhea" id="RHEA-COMP:17342"/>
        <dbReference type="ChEBI" id="CHEBI:33019"/>
        <dbReference type="ChEBI" id="CHEBI:61557"/>
        <dbReference type="ChEBI" id="CHEBI:140395"/>
        <dbReference type="EC" id="2.7.7.48"/>
    </reaction>
</comment>
<comment type="PTM">
    <text evidence="2">Specific enzymatic cleavages by the host yield mature proteins.</text>
</comment>
<comment type="similarity">
    <text evidence="8">Belongs to the Tymoviridae non-structural replication polyprotein family.</text>
</comment>
<reference key="1">
    <citation type="journal article" date="2001" name="J. Gen. Virol.">
        <title>Complete nucleotide sequence and genome organization of Grapevine fleck virus.</title>
        <authorList>
            <person name="Sabanadzovic S."/>
            <person name="Ghanem-Sabanadzovic N.A."/>
            <person name="Saldarelli P."/>
            <person name="Martelli G.P."/>
        </authorList>
    </citation>
    <scope>NUCLEOTIDE SEQUENCE [GENOMIC RNA]</scope>
</reference>
<sequence length="1949" mass="215590">MVLTLCFHSDRDHHFLSTLPLAEIRRLAPGGFSVFVPEDLLPHLSPSPSCPTPPLPRELTWSAACNPTNFPHLFRHHRPPPPCTRLTPRPPPPTPAPPSASTLPRVFHGGAPPAAFQPAIDFLHNTIQKDTIASSIIAALNPSLTSSLTLYPYALPPRWPSALNQAGIPATSYGHQSHPHPIHKTIETHLLHEHWANRATLPSTVMFMKRSKFDKLRVSNAALVKSASNFLHLLNPILTARDADRYTHLPLPDTLPSTPLYFMHHSLMYFSPSQIAGLFLAAPFLERLYASLVLPAESTIGSHPFFPSLYRYRTTGEHLHYVLEGNPSSSYTQPLTATQWLTTSSITAGDLHLTVTVLESWFSVHSILITRGVRPLELPRDIISLPSPDAVLLPNPSAFDIPLRSRLVPRDVCESLFVYVRAVRTLRTTDPAGFIRTQSNKAEFDWVTAEAWDHLAQFALLTAPVRPNTYFLPLLSPLAVVRHWLFRKQRPIFATLTLLSASTAAAIPIAIARLRTHSVTQLTILGHHFTPPKILARLPVALKRLIPKRLLPHLPSHLRPPPSWSPVFTLTFSELPKARFLTFPISGQTHTLLRQLHVPAILFAPQRPSRPLIFAGLLIGTVPVLYGAYRWFVSRFDPQTVYNRYSDLLHRPTWHLTFEREPLSCFPTPFLPHPSSHPRRARRLPPLPPAPPLPPQPPPPPPPQPSPHPPLFPASIPSPPPRPSSPPPPATSPASTPALTPIPAPKTAPPLTFPSPTLVAEPDAPVTARPSPLPLAPSRPFSELYPGHYADHSGSFFLQQPLVASSVPYPALDCLLVSCSAASGIPKEDLWATLCHIFPPSDLVSDLGLSTNHLTALAFTYQWLVTLRSGELVQRHGLLSAPFAFEITHTPPVPPATVGHFALSAPLTPTSACLTGGAPSPVISGPKASASLPRARFGPRPEAPRPPLTPPGFTPITEPTPATSPFALAALRFRLNRQPLPIRQVHAYSIALPRAKNLVSNLKNGFDGLVSSLPASDRTNLLPLIQALDHTADFPPARPPVGLIHIAGFAGCGKSYPIQQLLATQTFRHFRVVTPTTELRHEWKRALKLEGPSSWRVSTWETALAKRASVLVIDEVYKLPRGYLDLALLADPTVEFVIILGDPLQGSYNPTNPDSSNHRLIPEEDHLRPFIDFYCLWTRRLPRLVADFFGVPTTNPTRGHLAFASLNTTQSPLLVPSDSMARALTAGGHRAITYAASQGSTYPAPVHIFLDRNSNLVTNHVALVALTRSRSGVHFRPRAQDLPRHPQHLFTAFYKYAIDLLAHEADPSKPRPTPVDVTLLFQQQLRGLTILRDPSFSRITGGATHAFLAHAPLFTNLHGLRPTTFPDNLPTAPTYLARSLPYHQTESYPTSALPHRVFPASTTDWSAADDHPRVNPTFVAETRLPLQSELAPTLPSQPEPSPTYHSPATFETVYPGVDGEALARTFLAATDPLELEIFFRNNWSNQFPFINRPDTVACNPLTLVAPTHNQKQDPTLLHASLAKRLRFRDSTAPYTITAKDQALGYILYHSLQRAYCRSPEPVPFDPVLFASCIAENDFAQLTSKTQATIQANAFRSDPDWRHTFVRIFSKTQHKVNENSLFTSWKACQTLALMHDYLILVLGPVKKYQRILDSRDRPAHLYIHAGQTPHQLSEWCQNHLTPSVHLANDYTAFDQSQHGEAVVLEAWKMRRASIPEPFITLHVHVKTNIECQFGPLTCMRITGEPGTYDDNTDYNLAILYTQYLLHRTPVLVSGDDSLVDRVPPMNPSWPALAPLFALKPKPETSPFGLFCGYFVGPAGAVRAPRALFAKLAIALEDGSLPEKIASYVAEFSVGQSLGDSLWSLIPPELVIYQSACFDLICRHASPQLKLALRLGEVPDWGSLLSQLKLRFLTRPLFALLDAHTRVMVRTHKAHLLPSGHALHPSTEPFY</sequence>
<organismHost>
    <name type="scientific">Vitis vinifera</name>
    <name type="common">Grape</name>
    <dbReference type="NCBI Taxonomy" id="29760"/>
</organismHost>
<protein>
    <recommendedName>
        <fullName evidence="8">Non-structural replication polyprotein</fullName>
    </recommendedName>
    <component>
        <recommendedName>
            <fullName>Methyltransferase/Protease</fullName>
            <ecNumber>2.1.1.-</ecNumber>
            <ecNumber>3.4.22.-</ecNumber>
        </recommendedName>
        <alternativeName>
            <fullName>MET/PRO</fullName>
        </alternativeName>
    </component>
    <component>
        <recommendedName>
            <fullName>Putative helicase</fullName>
            <ecNumber>3.6.4.-</ecNumber>
        </recommendedName>
        <alternativeName>
            <fullName>HEL</fullName>
        </alternativeName>
    </component>
    <component>
        <recommendedName>
            <fullName>RNA-directed RNA polymerase</fullName>
            <ecNumber>2.7.7.48</ecNumber>
        </recommendedName>
        <alternativeName>
            <fullName>POL</fullName>
        </alternativeName>
    </component>
</protein>
<feature type="chain" id="PRO_0000402500" description="Non-structural replication polyprotein">
    <location>
        <begin position="1"/>
        <end position="1949"/>
    </location>
</feature>
<feature type="chain" id="PRO_0000460996" description="Methyltransferase/Protease" evidence="2">
    <location>
        <begin position="1"/>
        <end position="909" status="uncertain"/>
    </location>
</feature>
<feature type="chain" id="PRO_0000460997" description="Putative helicase" evidence="2">
    <location>
        <begin position="910" status="uncertain"/>
        <end position="1342" status="uncertain"/>
    </location>
</feature>
<feature type="chain" id="PRO_0000460998" description="RNA-directed RNA polymerase" evidence="2">
    <location>
        <begin position="1343" status="uncertain"/>
        <end position="1949"/>
    </location>
</feature>
<feature type="domain" description="Alphavirus-like MT" evidence="6">
    <location>
        <begin position="171"/>
        <end position="341"/>
    </location>
</feature>
<feature type="domain" description="Peptidase C21" evidence="5">
    <location>
        <begin position="762"/>
        <end position="922"/>
    </location>
</feature>
<feature type="domain" description="(+)RNA virus helicase ATP-binding">
    <location>
        <begin position="1017"/>
        <end position="1175"/>
    </location>
</feature>
<feature type="domain" description="(+)RNA virus helicase C-terminal">
    <location>
        <begin position="1176"/>
        <end position="1308"/>
    </location>
</feature>
<feature type="domain" description="RdRp catalytic" evidence="4">
    <location>
        <begin position="1682"/>
        <end position="1788"/>
    </location>
</feature>
<feature type="region of interest" description="Disordered" evidence="7">
    <location>
        <begin position="77"/>
        <end position="103"/>
    </location>
</feature>
<feature type="region of interest" description="Disordered" evidence="7">
    <location>
        <begin position="674"/>
        <end position="773"/>
    </location>
</feature>
<feature type="region of interest" description="Disordered" evidence="7">
    <location>
        <begin position="924"/>
        <end position="948"/>
    </location>
</feature>
<feature type="compositionally biased region" description="Pro residues" evidence="7">
    <location>
        <begin position="80"/>
        <end position="98"/>
    </location>
</feature>
<feature type="compositionally biased region" description="Pro residues" evidence="7">
    <location>
        <begin position="685"/>
        <end position="731"/>
    </location>
</feature>
<feature type="compositionally biased region" description="Pro residues" evidence="7">
    <location>
        <begin position="740"/>
        <end position="753"/>
    </location>
</feature>
<feature type="active site" description="For protease activity" evidence="5">
    <location>
        <position position="814"/>
    </location>
</feature>
<feature type="active site" description="For protease activity" evidence="5">
    <location>
        <position position="900"/>
    </location>
</feature>
<feature type="binding site" evidence="3">
    <location>
        <begin position="1048"/>
        <end position="1055"/>
    </location>
    <ligand>
        <name>ATP</name>
        <dbReference type="ChEBI" id="CHEBI:30616"/>
    </ligand>
</feature>
<feature type="site" description="Cleavage; by viral protease" evidence="1">
    <location>
        <begin position="909"/>
        <end position="910"/>
    </location>
</feature>
<feature type="site" description="Cleavage; by viral protease" evidence="1">
    <location>
        <begin position="1342"/>
        <end position="1343"/>
    </location>
</feature>
<proteinExistence type="inferred from homology"/>
<keyword id="KW-0067">ATP-binding</keyword>
<keyword id="KW-0945">Host-virus interaction</keyword>
<keyword id="KW-0378">Hydrolase</keyword>
<keyword id="KW-0489">Methyltransferase</keyword>
<keyword id="KW-1127">Modulation of host ubiquitin pathway by viral deubiquitinase</keyword>
<keyword id="KW-1130">Modulation of host ubiquitin pathway by virus</keyword>
<keyword id="KW-0511">Multifunctional enzyme</keyword>
<keyword id="KW-0547">Nucleotide-binding</keyword>
<keyword id="KW-0548">Nucleotidyltransferase</keyword>
<keyword id="KW-0645">Protease</keyword>
<keyword id="KW-1185">Reference proteome</keyword>
<keyword id="KW-0696">RNA-directed RNA polymerase</keyword>
<keyword id="KW-0788">Thiol protease</keyword>
<keyword id="KW-0808">Transferase</keyword>
<keyword id="KW-0693">Viral RNA replication</keyword>
<dbReference type="EC" id="2.1.1.-"/>
<dbReference type="EC" id="3.4.22.-"/>
<dbReference type="EC" id="3.6.4.-"/>
<dbReference type="EC" id="2.7.7.48"/>
<dbReference type="EMBL" id="AJ309022">
    <property type="protein sequence ID" value="CAC84400.1"/>
    <property type="molecule type" value="Genomic_RNA"/>
</dbReference>
<dbReference type="RefSeq" id="NP_542612.1">
    <property type="nucleotide sequence ID" value="NC_003347.1"/>
</dbReference>
<dbReference type="MEROPS" id="C21.001"/>
<dbReference type="GeneID" id="929660"/>
<dbReference type="KEGG" id="vg:929660"/>
<dbReference type="Proteomes" id="UP000000399">
    <property type="component" value="Segment"/>
</dbReference>
<dbReference type="GO" id="GO:0005524">
    <property type="term" value="F:ATP binding"/>
    <property type="evidence" value="ECO:0007669"/>
    <property type="project" value="UniProtKB-KW"/>
</dbReference>
<dbReference type="GO" id="GO:0004197">
    <property type="term" value="F:cysteine-type endopeptidase activity"/>
    <property type="evidence" value="ECO:0007669"/>
    <property type="project" value="InterPro"/>
</dbReference>
<dbReference type="GO" id="GO:0008174">
    <property type="term" value="F:mRNA methyltransferase activity"/>
    <property type="evidence" value="ECO:0007669"/>
    <property type="project" value="InterPro"/>
</dbReference>
<dbReference type="GO" id="GO:0003723">
    <property type="term" value="F:RNA binding"/>
    <property type="evidence" value="ECO:0007669"/>
    <property type="project" value="InterPro"/>
</dbReference>
<dbReference type="GO" id="GO:0003724">
    <property type="term" value="F:RNA helicase activity"/>
    <property type="evidence" value="ECO:0007669"/>
    <property type="project" value="UniProtKB-EC"/>
</dbReference>
<dbReference type="GO" id="GO:0003968">
    <property type="term" value="F:RNA-directed RNA polymerase activity"/>
    <property type="evidence" value="ECO:0007669"/>
    <property type="project" value="UniProtKB-KW"/>
</dbReference>
<dbReference type="GO" id="GO:0006351">
    <property type="term" value="P:DNA-templated transcription"/>
    <property type="evidence" value="ECO:0007669"/>
    <property type="project" value="InterPro"/>
</dbReference>
<dbReference type="GO" id="GO:0032259">
    <property type="term" value="P:methylation"/>
    <property type="evidence" value="ECO:0007669"/>
    <property type="project" value="UniProtKB-KW"/>
</dbReference>
<dbReference type="GO" id="GO:0016556">
    <property type="term" value="P:mRNA modification"/>
    <property type="evidence" value="ECO:0007669"/>
    <property type="project" value="InterPro"/>
</dbReference>
<dbReference type="GO" id="GO:0006508">
    <property type="term" value="P:proteolysis"/>
    <property type="evidence" value="ECO:0007669"/>
    <property type="project" value="UniProtKB-KW"/>
</dbReference>
<dbReference type="GO" id="GO:0006396">
    <property type="term" value="P:RNA processing"/>
    <property type="evidence" value="ECO:0007669"/>
    <property type="project" value="InterPro"/>
</dbReference>
<dbReference type="GO" id="GO:0039648">
    <property type="term" value="P:symbiont-mediated perturbation of host ubiquitin-like protein modification"/>
    <property type="evidence" value="ECO:0007669"/>
    <property type="project" value="UniProtKB-KW"/>
</dbReference>
<dbReference type="GO" id="GO:0039694">
    <property type="term" value="P:viral RNA genome replication"/>
    <property type="evidence" value="ECO:0007669"/>
    <property type="project" value="InterPro"/>
</dbReference>
<dbReference type="CDD" id="cd23247">
    <property type="entry name" value="Tymoviridae_RdRp"/>
    <property type="match status" value="1"/>
</dbReference>
<dbReference type="Gene3D" id="3.90.70.100">
    <property type="match status" value="1"/>
</dbReference>
<dbReference type="Gene3D" id="3.40.50.300">
    <property type="entry name" value="P-loop containing nucleotide triphosphate hydrolases"/>
    <property type="match status" value="1"/>
</dbReference>
<dbReference type="InterPro" id="IPR027351">
    <property type="entry name" value="(+)RNA_virus_helicase_core_dom"/>
</dbReference>
<dbReference type="InterPro" id="IPR002588">
    <property type="entry name" value="Alphavirus-like_MT_dom"/>
</dbReference>
<dbReference type="InterPro" id="IPR043502">
    <property type="entry name" value="DNA/RNA_pol_sf"/>
</dbReference>
<dbReference type="InterPro" id="IPR027417">
    <property type="entry name" value="P-loop_NTPase"/>
</dbReference>
<dbReference type="InterPro" id="IPR008043">
    <property type="entry name" value="Peptidase_C21"/>
</dbReference>
<dbReference type="InterPro" id="IPR001788">
    <property type="entry name" value="RNA-dep_RNA_pol_alsuvir"/>
</dbReference>
<dbReference type="InterPro" id="IPR007094">
    <property type="entry name" value="RNA-dir_pol_PSvirus"/>
</dbReference>
<dbReference type="InterPro" id="IPR043629">
    <property type="entry name" value="Salyut_dom"/>
</dbReference>
<dbReference type="InterPro" id="IPR043181">
    <property type="entry name" value="TYMV_endopept_dom"/>
</dbReference>
<dbReference type="Pfam" id="PF05381">
    <property type="entry name" value="Peptidase_C21"/>
    <property type="match status" value="1"/>
</dbReference>
<dbReference type="Pfam" id="PF00978">
    <property type="entry name" value="RdRP_2"/>
    <property type="match status" value="1"/>
</dbReference>
<dbReference type="Pfam" id="PF19227">
    <property type="entry name" value="Salyut"/>
    <property type="match status" value="1"/>
</dbReference>
<dbReference type="Pfam" id="PF01443">
    <property type="entry name" value="Viral_helicase1"/>
    <property type="match status" value="1"/>
</dbReference>
<dbReference type="Pfam" id="PF01660">
    <property type="entry name" value="Vmethyltransf"/>
    <property type="match status" value="1"/>
</dbReference>
<dbReference type="SUPFAM" id="SSF56672">
    <property type="entry name" value="DNA/RNA polymerases"/>
    <property type="match status" value="1"/>
</dbReference>
<dbReference type="SUPFAM" id="SSF52540">
    <property type="entry name" value="P-loop containing nucleoside triphosphate hydrolases"/>
    <property type="match status" value="1"/>
</dbReference>
<dbReference type="PROSITE" id="PS51743">
    <property type="entry name" value="ALPHAVIRUS_MT"/>
    <property type="match status" value="1"/>
</dbReference>
<dbReference type="PROSITE" id="PS51738">
    <property type="entry name" value="PEPTIDASE_C21"/>
    <property type="match status" value="1"/>
</dbReference>
<dbReference type="PROSITE" id="PS51657">
    <property type="entry name" value="PSRV_HELICASE"/>
    <property type="match status" value="1"/>
</dbReference>
<dbReference type="PROSITE" id="PS50507">
    <property type="entry name" value="RDRP_SSRNA_POS"/>
    <property type="match status" value="1"/>
</dbReference>
<name>POLN_GFKVM</name>
<organism>
    <name type="scientific">Grapevine fleck virus (isolate Italy/MT48)</name>
    <name type="common">GFkV</name>
    <dbReference type="NCBI Taxonomy" id="652668"/>
    <lineage>
        <taxon>Viruses</taxon>
        <taxon>Riboviria</taxon>
        <taxon>Orthornavirae</taxon>
        <taxon>Kitrinoviricota</taxon>
        <taxon>Alsuviricetes</taxon>
        <taxon>Tymovirales</taxon>
        <taxon>Tymoviridae</taxon>
        <taxon>Maculavirus</taxon>
        <taxon>Maculavirus vitis</taxon>
    </lineage>
</organism>
<evidence type="ECO:0000250" key="1">
    <source>
        <dbReference type="UniProtKB" id="P10358"/>
    </source>
</evidence>
<evidence type="ECO:0000250" key="2">
    <source>
        <dbReference type="UniProtKB" id="Q91TW9"/>
    </source>
</evidence>
<evidence type="ECO:0000255" key="3"/>
<evidence type="ECO:0000255" key="4">
    <source>
        <dbReference type="PROSITE-ProRule" id="PRU00539"/>
    </source>
</evidence>
<evidence type="ECO:0000255" key="5">
    <source>
        <dbReference type="PROSITE-ProRule" id="PRU01074"/>
    </source>
</evidence>
<evidence type="ECO:0000255" key="6">
    <source>
        <dbReference type="PROSITE-ProRule" id="PRU01079"/>
    </source>
</evidence>
<evidence type="ECO:0000256" key="7">
    <source>
        <dbReference type="SAM" id="MobiDB-lite"/>
    </source>
</evidence>
<evidence type="ECO:0000305" key="8"/>
<accession>Q8UZB6</accession>